<proteinExistence type="inferred from homology"/>
<accession>Q8YA75</accession>
<reference key="1">
    <citation type="journal article" date="2001" name="Science">
        <title>Comparative genomics of Listeria species.</title>
        <authorList>
            <person name="Glaser P."/>
            <person name="Frangeul L."/>
            <person name="Buchrieser C."/>
            <person name="Rusniok C."/>
            <person name="Amend A."/>
            <person name="Baquero F."/>
            <person name="Berche P."/>
            <person name="Bloecker H."/>
            <person name="Brandt P."/>
            <person name="Chakraborty T."/>
            <person name="Charbit A."/>
            <person name="Chetouani F."/>
            <person name="Couve E."/>
            <person name="de Daruvar A."/>
            <person name="Dehoux P."/>
            <person name="Domann E."/>
            <person name="Dominguez-Bernal G."/>
            <person name="Duchaud E."/>
            <person name="Durant L."/>
            <person name="Dussurget O."/>
            <person name="Entian K.-D."/>
            <person name="Fsihi H."/>
            <person name="Garcia-del Portillo F."/>
            <person name="Garrido P."/>
            <person name="Gautier L."/>
            <person name="Goebel W."/>
            <person name="Gomez-Lopez N."/>
            <person name="Hain T."/>
            <person name="Hauf J."/>
            <person name="Jackson D."/>
            <person name="Jones L.-M."/>
            <person name="Kaerst U."/>
            <person name="Kreft J."/>
            <person name="Kuhn M."/>
            <person name="Kunst F."/>
            <person name="Kurapkat G."/>
            <person name="Madueno E."/>
            <person name="Maitournam A."/>
            <person name="Mata Vicente J."/>
            <person name="Ng E."/>
            <person name="Nedjari H."/>
            <person name="Nordsiek G."/>
            <person name="Novella S."/>
            <person name="de Pablos B."/>
            <person name="Perez-Diaz J.-C."/>
            <person name="Purcell R."/>
            <person name="Remmel B."/>
            <person name="Rose M."/>
            <person name="Schlueter T."/>
            <person name="Simoes N."/>
            <person name="Tierrez A."/>
            <person name="Vazquez-Boland J.-A."/>
            <person name="Voss H."/>
            <person name="Wehland J."/>
            <person name="Cossart P."/>
        </authorList>
    </citation>
    <scope>NUCLEOTIDE SEQUENCE [LARGE SCALE GENOMIC DNA]</scope>
    <source>
        <strain>ATCC BAA-679 / EGD-e</strain>
    </source>
</reference>
<dbReference type="EC" id="7.4.2.11" evidence="1"/>
<dbReference type="EMBL" id="AL591974">
    <property type="protein sequence ID" value="CAD00811.1"/>
    <property type="molecule type" value="Genomic_DNA"/>
</dbReference>
<dbReference type="PIR" id="AE1110">
    <property type="entry name" value="AE1110"/>
</dbReference>
<dbReference type="RefSeq" id="NP_463815.1">
    <property type="nucleotide sequence ID" value="NC_003210.1"/>
</dbReference>
<dbReference type="RefSeq" id="WP_003722904.1">
    <property type="nucleotide sequence ID" value="NZ_CP149495.1"/>
</dbReference>
<dbReference type="SMR" id="Q8YA75"/>
<dbReference type="STRING" id="169963.gene:17592935"/>
<dbReference type="PaxDb" id="169963-lmo0284"/>
<dbReference type="EnsemblBacteria" id="CAD00811">
    <property type="protein sequence ID" value="CAD00811"/>
    <property type="gene ID" value="CAD00811"/>
</dbReference>
<dbReference type="GeneID" id="987441"/>
<dbReference type="KEGG" id="lmo:lmo0284"/>
<dbReference type="PATRIC" id="fig|169963.11.peg.292"/>
<dbReference type="eggNOG" id="COG1135">
    <property type="taxonomic scope" value="Bacteria"/>
</dbReference>
<dbReference type="HOGENOM" id="CLU_000604_1_3_9"/>
<dbReference type="OrthoDB" id="9802264at2"/>
<dbReference type="PhylomeDB" id="Q8YA75"/>
<dbReference type="BioCyc" id="LMON169963:LMO0284-MONOMER"/>
<dbReference type="Proteomes" id="UP000000817">
    <property type="component" value="Chromosome"/>
</dbReference>
<dbReference type="GO" id="GO:0005886">
    <property type="term" value="C:plasma membrane"/>
    <property type="evidence" value="ECO:0007669"/>
    <property type="project" value="UniProtKB-SubCell"/>
</dbReference>
<dbReference type="GO" id="GO:0033232">
    <property type="term" value="F:ABC-type D-methionine transporter activity"/>
    <property type="evidence" value="ECO:0007669"/>
    <property type="project" value="UniProtKB-EC"/>
</dbReference>
<dbReference type="GO" id="GO:0005524">
    <property type="term" value="F:ATP binding"/>
    <property type="evidence" value="ECO:0007669"/>
    <property type="project" value="UniProtKB-KW"/>
</dbReference>
<dbReference type="GO" id="GO:0016887">
    <property type="term" value="F:ATP hydrolysis activity"/>
    <property type="evidence" value="ECO:0007669"/>
    <property type="project" value="InterPro"/>
</dbReference>
<dbReference type="CDD" id="cd03258">
    <property type="entry name" value="ABC_MetN_methionine_transporter"/>
    <property type="match status" value="1"/>
</dbReference>
<dbReference type="FunFam" id="3.40.50.300:FF:000056">
    <property type="entry name" value="Cell division ATP-binding protein FtsE"/>
    <property type="match status" value="1"/>
</dbReference>
<dbReference type="Gene3D" id="3.30.70.260">
    <property type="match status" value="1"/>
</dbReference>
<dbReference type="Gene3D" id="3.40.50.300">
    <property type="entry name" value="P-loop containing nucleotide triphosphate hydrolases"/>
    <property type="match status" value="1"/>
</dbReference>
<dbReference type="InterPro" id="IPR003593">
    <property type="entry name" value="AAA+_ATPase"/>
</dbReference>
<dbReference type="InterPro" id="IPR003439">
    <property type="entry name" value="ABC_transporter-like_ATP-bd"/>
</dbReference>
<dbReference type="InterPro" id="IPR017871">
    <property type="entry name" value="ABC_transporter-like_CS"/>
</dbReference>
<dbReference type="InterPro" id="IPR045865">
    <property type="entry name" value="ACT-like_dom_sf"/>
</dbReference>
<dbReference type="InterPro" id="IPR041701">
    <property type="entry name" value="MetN_ABC"/>
</dbReference>
<dbReference type="InterPro" id="IPR050086">
    <property type="entry name" value="MetN_ABC_transporter-like"/>
</dbReference>
<dbReference type="InterPro" id="IPR018449">
    <property type="entry name" value="NIL_domain"/>
</dbReference>
<dbReference type="InterPro" id="IPR027417">
    <property type="entry name" value="P-loop_NTPase"/>
</dbReference>
<dbReference type="PANTHER" id="PTHR43166">
    <property type="entry name" value="AMINO ACID IMPORT ATP-BINDING PROTEIN"/>
    <property type="match status" value="1"/>
</dbReference>
<dbReference type="PANTHER" id="PTHR43166:SF30">
    <property type="entry name" value="METHIONINE IMPORT ATP-BINDING PROTEIN METN"/>
    <property type="match status" value="1"/>
</dbReference>
<dbReference type="Pfam" id="PF00005">
    <property type="entry name" value="ABC_tran"/>
    <property type="match status" value="1"/>
</dbReference>
<dbReference type="Pfam" id="PF09383">
    <property type="entry name" value="NIL"/>
    <property type="match status" value="1"/>
</dbReference>
<dbReference type="SMART" id="SM00382">
    <property type="entry name" value="AAA"/>
    <property type="match status" value="1"/>
</dbReference>
<dbReference type="SMART" id="SM00930">
    <property type="entry name" value="NIL"/>
    <property type="match status" value="1"/>
</dbReference>
<dbReference type="SUPFAM" id="SSF55021">
    <property type="entry name" value="ACT-like"/>
    <property type="match status" value="1"/>
</dbReference>
<dbReference type="SUPFAM" id="SSF52540">
    <property type="entry name" value="P-loop containing nucleoside triphosphate hydrolases"/>
    <property type="match status" value="1"/>
</dbReference>
<dbReference type="PROSITE" id="PS00211">
    <property type="entry name" value="ABC_TRANSPORTER_1"/>
    <property type="match status" value="1"/>
</dbReference>
<dbReference type="PROSITE" id="PS50893">
    <property type="entry name" value="ABC_TRANSPORTER_2"/>
    <property type="match status" value="1"/>
</dbReference>
<dbReference type="PROSITE" id="PS51264">
    <property type="entry name" value="METN"/>
    <property type="match status" value="1"/>
</dbReference>
<comment type="function">
    <text evidence="1">Part of the ABC transporter complex MetNIQ involved in methionine import. Responsible for energy coupling to the transport system.</text>
</comment>
<comment type="catalytic activity">
    <reaction evidence="1">
        <text>L-methionine(out) + ATP + H2O = L-methionine(in) + ADP + phosphate + H(+)</text>
        <dbReference type="Rhea" id="RHEA:29779"/>
        <dbReference type="ChEBI" id="CHEBI:15377"/>
        <dbReference type="ChEBI" id="CHEBI:15378"/>
        <dbReference type="ChEBI" id="CHEBI:30616"/>
        <dbReference type="ChEBI" id="CHEBI:43474"/>
        <dbReference type="ChEBI" id="CHEBI:57844"/>
        <dbReference type="ChEBI" id="CHEBI:456216"/>
        <dbReference type="EC" id="7.4.2.11"/>
    </reaction>
</comment>
<comment type="catalytic activity">
    <reaction evidence="1">
        <text>D-methionine(out) + ATP + H2O = D-methionine(in) + ADP + phosphate + H(+)</text>
        <dbReference type="Rhea" id="RHEA:29767"/>
        <dbReference type="ChEBI" id="CHEBI:15377"/>
        <dbReference type="ChEBI" id="CHEBI:15378"/>
        <dbReference type="ChEBI" id="CHEBI:30616"/>
        <dbReference type="ChEBI" id="CHEBI:43474"/>
        <dbReference type="ChEBI" id="CHEBI:57932"/>
        <dbReference type="ChEBI" id="CHEBI:456216"/>
        <dbReference type="EC" id="7.4.2.11"/>
    </reaction>
</comment>
<comment type="subunit">
    <text evidence="1">The complex is composed of two ATP-binding proteins (MetN), two transmembrane proteins (MetI) and a solute-binding protein (MetQ).</text>
</comment>
<comment type="subcellular location">
    <subcellularLocation>
        <location evidence="1">Cell membrane</location>
        <topology evidence="1">Peripheral membrane protein</topology>
    </subcellularLocation>
</comment>
<comment type="similarity">
    <text evidence="1">Belongs to the ABC transporter superfamily. Methionine importer (TC 3.A.1.24) family.</text>
</comment>
<evidence type="ECO:0000255" key="1">
    <source>
        <dbReference type="HAMAP-Rule" id="MF_01719"/>
    </source>
</evidence>
<sequence length="338" mass="36979">MIELHQVSKSFNVNGKTVEAVKNVSITVEKGEIFGVVGYSGAGKSTLVRCINLLERPDAGQVVIDGKNLSTLSSKELRVARRKIGMIFQGYNLLKTATVYDNIAKPLKLEGVPKNEIETRVNKYLSIVGLEDKRNNYPSQLSGGQKQRVAIARALAHEPEILLSDEATSALDPETTEAILQLLLKINAELGITIFLITHELDVIQRICDRVAVMENGHLVEQGTVLDIFTKAKHATTKRFVGSEASFDIPQDLLEKYVATGKLVSLHFIGDEADEPALALVSRKFDVLPSILAGGIDHLKNGTLGKLLVHLKGDEVEYSKAISYLKESGVVVEEVELL</sequence>
<gene>
    <name evidence="1" type="primary">metN1</name>
    <name type="ordered locus">lmo0284</name>
</gene>
<protein>
    <recommendedName>
        <fullName evidence="1">Methionine import ATP-binding protein MetN 1</fullName>
        <ecNumber evidence="1">7.4.2.11</ecNumber>
    </recommendedName>
</protein>
<keyword id="KW-0029">Amino-acid transport</keyword>
<keyword id="KW-0067">ATP-binding</keyword>
<keyword id="KW-1003">Cell membrane</keyword>
<keyword id="KW-0472">Membrane</keyword>
<keyword id="KW-0547">Nucleotide-binding</keyword>
<keyword id="KW-1185">Reference proteome</keyword>
<keyword id="KW-1278">Translocase</keyword>
<keyword id="KW-0813">Transport</keyword>
<feature type="chain" id="PRO_0000270328" description="Methionine import ATP-binding protein MetN 1">
    <location>
        <begin position="1"/>
        <end position="338"/>
    </location>
</feature>
<feature type="domain" description="ABC transporter" evidence="1">
    <location>
        <begin position="2"/>
        <end position="241"/>
    </location>
</feature>
<feature type="binding site" evidence="1">
    <location>
        <begin position="38"/>
        <end position="45"/>
    </location>
    <ligand>
        <name>ATP</name>
        <dbReference type="ChEBI" id="CHEBI:30616"/>
    </ligand>
</feature>
<organism>
    <name type="scientific">Listeria monocytogenes serovar 1/2a (strain ATCC BAA-679 / EGD-e)</name>
    <dbReference type="NCBI Taxonomy" id="169963"/>
    <lineage>
        <taxon>Bacteria</taxon>
        <taxon>Bacillati</taxon>
        <taxon>Bacillota</taxon>
        <taxon>Bacilli</taxon>
        <taxon>Bacillales</taxon>
        <taxon>Listeriaceae</taxon>
        <taxon>Listeria</taxon>
    </lineage>
</organism>
<name>METN1_LISMO</name>